<sequence length="747" mass="84731">MGDVLSTHLDDARRQNIAEKTEKILREFLRFYEDQYGVSLFNSMRHEIEGTGPPQAQLLWRKVPLDERIIFSGNLFQYQEDNKKWRNRFSLVPHNYGLVLYENKVAYERQIPPRAVINSAGYKVLTSLDQYLELVGNSLPGTTSKSGSTPILKCPTQFPLILWHPYARHYYFCMMTEAEQDKWQAVLQDCVRHCNNGIPENSKVEGPAFTDAIRMYRQSKEQYGTWEMLCGNEVQILSNLVMEELGPALKTELGPRLKGKPQERQRQWIQISDAVYRLVFEQAKVHFEEVLCKLQLARPAMEAVIRTDMDQIITSKEHLASKIRAFILPKAEVCVRNHVQPYIPSILEALMVPTSQGFTEVRDVFFKEVTDMNLNVINEGGIDKLGEYMEKLSQLAYHPLKMQSCYEKMEPLRLDGLQQRFDVSSTSVFKQRAQIHMREQMDNAVYTFETLLHQELGKGPTKEELCKSIQRILERVLKKYDYDSSSVRKRFFREALLQITIPFLLKKLAPTCKSELPRFQELIFEDFARFILVENTYEEVVLQTVMKDILQAVKEAAVQRKHNLYRDSVVLHNSDPNLHLLAEGAPIDWGEQYGDGGDGSDSGGSPCPSEAATLTEKRRRAKQVVSVVQDEESGLPFEAGSEPPSPASPDNVTELRGLLAQDLQAESSPPASPLLNGAPVQESPQPMTVLEASPPASPLRHLPPGKAVDLEPPKPSDQETGEKVSSPGSRPPIHTTTEDSAGVQTEF</sequence>
<name>NIBA2_RAT</name>
<reference key="1">
    <citation type="submission" date="2005-09" db="EMBL/GenBank/DDBJ databases">
        <authorList>
            <person name="Mural R.J."/>
            <person name="Adams M.D."/>
            <person name="Myers E.W."/>
            <person name="Smith H.O."/>
            <person name="Venter J.C."/>
        </authorList>
    </citation>
    <scope>NUCLEOTIDE SEQUENCE [LARGE SCALE GENOMIC DNA]</scope>
</reference>
<reference key="2">
    <citation type="journal article" date="2004" name="Genome Res.">
        <title>The status, quality, and expansion of the NIH full-length cDNA project: the Mammalian Gene Collection (MGC).</title>
        <authorList>
            <consortium name="The MGC Project Team"/>
        </authorList>
    </citation>
    <scope>NUCLEOTIDE SEQUENCE [LARGE SCALE MRNA]</scope>
</reference>
<reference key="3">
    <citation type="journal article" date="2012" name="Nat. Commun.">
        <title>Quantitative maps of protein phosphorylation sites across 14 different rat organs and tissues.</title>
        <authorList>
            <person name="Lundby A."/>
            <person name="Secher A."/>
            <person name="Lage K."/>
            <person name="Nordsborg N.B."/>
            <person name="Dmytriyev A."/>
            <person name="Lundby C."/>
            <person name="Olsen J.V."/>
        </authorList>
    </citation>
    <scope>PHOSPHORYLATION [LARGE SCALE ANALYSIS] AT SER-626; SER-641; SER-645; SER-648; SER-672; SER-693 AND SER-697</scope>
    <scope>IDENTIFICATION BY MASS SPECTROMETRY [LARGE SCALE ANALYSIS]</scope>
</reference>
<gene>
    <name evidence="6" type="primary">Niban2</name>
    <name type="synonym">Fam129b</name>
</gene>
<feature type="initiator methionine" description="Removed" evidence="2">
    <location>
        <position position="1"/>
    </location>
</feature>
<feature type="chain" id="PRO_0000412856" description="Protein Niban 2">
    <location>
        <begin position="2"/>
        <end position="747"/>
    </location>
</feature>
<feature type="domain" description="PH" evidence="3">
    <location>
        <begin position="68"/>
        <end position="192"/>
    </location>
</feature>
<feature type="region of interest" description="Disordered" evidence="4">
    <location>
        <begin position="589"/>
        <end position="747"/>
    </location>
</feature>
<feature type="compositionally biased region" description="Gly residues" evidence="4">
    <location>
        <begin position="593"/>
        <end position="602"/>
    </location>
</feature>
<feature type="compositionally biased region" description="Basic and acidic residues" evidence="4">
    <location>
        <begin position="708"/>
        <end position="722"/>
    </location>
</feature>
<feature type="compositionally biased region" description="Polar residues" evidence="4">
    <location>
        <begin position="734"/>
        <end position="747"/>
    </location>
</feature>
<feature type="modified residue" description="Phosphoserine" evidence="2">
    <location>
        <position position="568"/>
    </location>
</feature>
<feature type="modified residue" description="Phosphoserine" evidence="2">
    <location>
        <position position="574"/>
    </location>
</feature>
<feature type="modified residue" description="Phosphoserine" evidence="2">
    <location>
        <position position="605"/>
    </location>
</feature>
<feature type="modified residue" description="Phosphoserine" evidence="7">
    <location>
        <position position="626"/>
    </location>
</feature>
<feature type="modified residue" description="Phosphoserine" evidence="7">
    <location>
        <position position="641"/>
    </location>
</feature>
<feature type="modified residue" description="Phosphoserine" evidence="7">
    <location>
        <position position="645"/>
    </location>
</feature>
<feature type="modified residue" description="Phosphoserine" evidence="7">
    <location>
        <position position="648"/>
    </location>
</feature>
<feature type="modified residue" description="Phosphoserine" evidence="2">
    <location>
        <position position="667"/>
    </location>
</feature>
<feature type="modified residue" description="Phosphoserine" evidence="7">
    <location>
        <position position="672"/>
    </location>
</feature>
<feature type="modified residue" description="Phosphoserine" evidence="2">
    <location>
        <position position="683"/>
    </location>
</feature>
<feature type="modified residue" description="Phosphoserine" evidence="7">
    <location>
        <position position="693"/>
    </location>
</feature>
<feature type="modified residue" description="Phosphoserine" evidence="7">
    <location>
        <position position="697"/>
    </location>
</feature>
<feature type="lipid moiety-binding region" description="N-myristoyl glycine" evidence="2">
    <location>
        <position position="2"/>
    </location>
</feature>
<dbReference type="EMBL" id="CH474001">
    <property type="protein sequence ID" value="EDL93203.1"/>
    <property type="molecule type" value="Genomic_DNA"/>
</dbReference>
<dbReference type="EMBL" id="BC168248">
    <property type="protein sequence ID" value="AAI68248.1"/>
    <property type="molecule type" value="mRNA"/>
</dbReference>
<dbReference type="RefSeq" id="NP_001103355.1">
    <property type="nucleotide sequence ID" value="NM_001109885.1"/>
</dbReference>
<dbReference type="SMR" id="B4F7E8"/>
<dbReference type="FunCoup" id="B4F7E8">
    <property type="interactions" value="229"/>
</dbReference>
<dbReference type="STRING" id="10116.ENSRNOP00000021689"/>
<dbReference type="iPTMnet" id="B4F7E8"/>
<dbReference type="PhosphoSitePlus" id="B4F7E8"/>
<dbReference type="jPOST" id="B4F7E8"/>
<dbReference type="PaxDb" id="10116-ENSRNOP00000021689"/>
<dbReference type="PeptideAtlas" id="B4F7E8"/>
<dbReference type="Ensembl" id="ENSRNOT00000021689.6">
    <property type="protein sequence ID" value="ENSRNOP00000021689.4"/>
    <property type="gene ID" value="ENSRNOG00000015845.6"/>
</dbReference>
<dbReference type="GeneID" id="362115"/>
<dbReference type="KEGG" id="rno:362115"/>
<dbReference type="UCSC" id="RGD:1307018">
    <property type="organism name" value="rat"/>
</dbReference>
<dbReference type="AGR" id="RGD:1307018"/>
<dbReference type="CTD" id="64855"/>
<dbReference type="RGD" id="1307018">
    <property type="gene designation" value="Niban2"/>
</dbReference>
<dbReference type="eggNOG" id="ENOG502QV2S">
    <property type="taxonomic scope" value="Eukaryota"/>
</dbReference>
<dbReference type="GeneTree" id="ENSGT00940000154149"/>
<dbReference type="HOGENOM" id="CLU_009718_1_1_1"/>
<dbReference type="InParanoid" id="B4F7E8"/>
<dbReference type="OMA" id="GTPIDWG"/>
<dbReference type="OrthoDB" id="9010513at2759"/>
<dbReference type="TreeFam" id="TF333351"/>
<dbReference type="PRO" id="PR:B4F7E8"/>
<dbReference type="Proteomes" id="UP000002494">
    <property type="component" value="Chromosome 3"/>
</dbReference>
<dbReference type="Proteomes" id="UP000234681">
    <property type="component" value="Chromosome 3"/>
</dbReference>
<dbReference type="Bgee" id="ENSRNOG00000015845">
    <property type="expression patterns" value="Expressed in lung and 19 other cell types or tissues"/>
</dbReference>
<dbReference type="GO" id="GO:0005912">
    <property type="term" value="C:adherens junction"/>
    <property type="evidence" value="ECO:0000250"/>
    <property type="project" value="UniProtKB"/>
</dbReference>
<dbReference type="GO" id="GO:0005737">
    <property type="term" value="C:cytoplasm"/>
    <property type="evidence" value="ECO:0000266"/>
    <property type="project" value="RGD"/>
</dbReference>
<dbReference type="GO" id="GO:0005829">
    <property type="term" value="C:cytosol"/>
    <property type="evidence" value="ECO:0000250"/>
    <property type="project" value="UniProtKB"/>
</dbReference>
<dbReference type="GO" id="GO:0005634">
    <property type="term" value="C:nucleus"/>
    <property type="evidence" value="ECO:0000266"/>
    <property type="project" value="RGD"/>
</dbReference>
<dbReference type="GO" id="GO:0005886">
    <property type="term" value="C:plasma membrane"/>
    <property type="evidence" value="ECO:0007669"/>
    <property type="project" value="Ensembl"/>
</dbReference>
<dbReference type="GO" id="GO:0003713">
    <property type="term" value="F:transcription coactivator activity"/>
    <property type="evidence" value="ECO:0000266"/>
    <property type="project" value="RGD"/>
</dbReference>
<dbReference type="GO" id="GO:0032274">
    <property type="term" value="P:gonadotropin secretion"/>
    <property type="evidence" value="ECO:0000266"/>
    <property type="project" value="RGD"/>
</dbReference>
<dbReference type="GO" id="GO:0043066">
    <property type="term" value="P:negative regulation of apoptotic process"/>
    <property type="evidence" value="ECO:0000250"/>
    <property type="project" value="UniProtKB"/>
</dbReference>
<dbReference type="GO" id="GO:0008285">
    <property type="term" value="P:negative regulation of cell population proliferation"/>
    <property type="evidence" value="ECO:0000266"/>
    <property type="project" value="RGD"/>
</dbReference>
<dbReference type="GO" id="GO:2000279">
    <property type="term" value="P:negative regulation of DNA biosynthetic process"/>
    <property type="evidence" value="ECO:0000266"/>
    <property type="project" value="RGD"/>
</dbReference>
<dbReference type="GO" id="GO:0045892">
    <property type="term" value="P:negative regulation of DNA-templated transcription"/>
    <property type="evidence" value="ECO:0000266"/>
    <property type="project" value="RGD"/>
</dbReference>
<dbReference type="GO" id="GO:0045893">
    <property type="term" value="P:positive regulation of DNA-templated transcription"/>
    <property type="evidence" value="ECO:0000266"/>
    <property type="project" value="RGD"/>
</dbReference>
<dbReference type="CDD" id="cd23949">
    <property type="entry name" value="Niban-like"/>
    <property type="match status" value="1"/>
</dbReference>
<dbReference type="FunFam" id="2.30.29.30:FF:000255">
    <property type="entry name" value="niban-like protein 1 isoform X1"/>
    <property type="match status" value="1"/>
</dbReference>
<dbReference type="Gene3D" id="2.30.29.30">
    <property type="entry name" value="Pleckstrin-homology domain (PH domain)/Phosphotyrosine-binding domain (PTB)"/>
    <property type="match status" value="1"/>
</dbReference>
<dbReference type="InterPro" id="IPR026088">
    <property type="entry name" value="Niban-like"/>
</dbReference>
<dbReference type="InterPro" id="IPR011993">
    <property type="entry name" value="PH-like_dom_sf"/>
</dbReference>
<dbReference type="InterPro" id="IPR001849">
    <property type="entry name" value="PH_domain"/>
</dbReference>
<dbReference type="PANTHER" id="PTHR14392">
    <property type="entry name" value="NIBAN FAMILY MEMBER"/>
    <property type="match status" value="1"/>
</dbReference>
<dbReference type="PANTHER" id="PTHR14392:SF2">
    <property type="entry name" value="PROTEIN NIBAN 2"/>
    <property type="match status" value="1"/>
</dbReference>
<dbReference type="SUPFAM" id="SSF50729">
    <property type="entry name" value="PH domain-like"/>
    <property type="match status" value="1"/>
</dbReference>
<dbReference type="PROSITE" id="PS50003">
    <property type="entry name" value="PH_DOMAIN"/>
    <property type="match status" value="1"/>
</dbReference>
<keyword id="KW-0965">Cell junction</keyword>
<keyword id="KW-0963">Cytoplasm</keyword>
<keyword id="KW-0449">Lipoprotein</keyword>
<keyword id="KW-0472">Membrane</keyword>
<keyword id="KW-0519">Myristate</keyword>
<keyword id="KW-0597">Phosphoprotein</keyword>
<keyword id="KW-1185">Reference proteome</keyword>
<organism>
    <name type="scientific">Rattus norvegicus</name>
    <name type="common">Rat</name>
    <dbReference type="NCBI Taxonomy" id="10116"/>
    <lineage>
        <taxon>Eukaryota</taxon>
        <taxon>Metazoa</taxon>
        <taxon>Chordata</taxon>
        <taxon>Craniata</taxon>
        <taxon>Vertebrata</taxon>
        <taxon>Euteleostomi</taxon>
        <taxon>Mammalia</taxon>
        <taxon>Eutheria</taxon>
        <taxon>Euarchontoglires</taxon>
        <taxon>Glires</taxon>
        <taxon>Rodentia</taxon>
        <taxon>Myomorpha</taxon>
        <taxon>Muroidea</taxon>
        <taxon>Muridae</taxon>
        <taxon>Murinae</taxon>
        <taxon>Rattus</taxon>
    </lineage>
</organism>
<proteinExistence type="evidence at protein level"/>
<accession>B4F7E8</accession>
<comment type="function">
    <text evidence="1">May play a role in apoptosis suppression.</text>
</comment>
<comment type="subcellular location">
    <subcellularLocation>
        <location evidence="1">Cytoplasm</location>
        <location evidence="1">Cytosol</location>
    </subcellularLocation>
    <subcellularLocation>
        <location evidence="1">Cell junction</location>
        <location evidence="1">Adherens junction</location>
    </subcellularLocation>
    <subcellularLocation>
        <location evidence="2">Membrane</location>
        <topology evidence="2">Lipid-anchor</topology>
    </subcellularLocation>
    <text evidence="1">In exponentially growing cells, exclusively cytoplasmic. Cell membrane localization is observed when cells reach confluency and during telophase (By similarity). Phosphorylation may play a role in relocalization to the membrane (By similarity).</text>
</comment>
<comment type="PTM">
    <text evidence="1">As apoptosis proceeds, degraded via an proteasome-independent pathway, probably by caspases.</text>
</comment>
<comment type="similarity">
    <text evidence="5">Belongs to the Niban family.</text>
</comment>
<protein>
    <recommendedName>
        <fullName evidence="5">Protein Niban 2</fullName>
    </recommendedName>
    <alternativeName>
        <fullName>Meg-3</fullName>
    </alternativeName>
    <alternativeName>
        <fullName>Niban-like protein 1</fullName>
    </alternativeName>
    <alternativeName>
        <fullName>Protein FAM129B</fullName>
    </alternativeName>
</protein>
<evidence type="ECO:0000250" key="1"/>
<evidence type="ECO:0000250" key="2">
    <source>
        <dbReference type="UniProtKB" id="Q96TA1"/>
    </source>
</evidence>
<evidence type="ECO:0000255" key="3">
    <source>
        <dbReference type="PROSITE-ProRule" id="PRU00145"/>
    </source>
</evidence>
<evidence type="ECO:0000256" key="4">
    <source>
        <dbReference type="SAM" id="MobiDB-lite"/>
    </source>
</evidence>
<evidence type="ECO:0000305" key="5"/>
<evidence type="ECO:0000312" key="6">
    <source>
        <dbReference type="RGD" id="1307018"/>
    </source>
</evidence>
<evidence type="ECO:0007744" key="7">
    <source>
    </source>
</evidence>